<gene>
    <name type="ordered locus">AB57_0691</name>
</gene>
<comment type="function">
    <text evidence="1">Displays ATPase and GTPase activities.</text>
</comment>
<comment type="similarity">
    <text evidence="1">Belongs to the RapZ-like family.</text>
</comment>
<organism>
    <name type="scientific">Acinetobacter baumannii (strain AB0057)</name>
    <dbReference type="NCBI Taxonomy" id="480119"/>
    <lineage>
        <taxon>Bacteria</taxon>
        <taxon>Pseudomonadati</taxon>
        <taxon>Pseudomonadota</taxon>
        <taxon>Gammaproteobacteria</taxon>
        <taxon>Moraxellales</taxon>
        <taxon>Moraxellaceae</taxon>
        <taxon>Acinetobacter</taxon>
        <taxon>Acinetobacter calcoaceticus/baumannii complex</taxon>
    </lineage>
</organism>
<protein>
    <recommendedName>
        <fullName evidence="1">Nucleotide-binding protein AB57_0691</fullName>
    </recommendedName>
</protein>
<keyword id="KW-0067">ATP-binding</keyword>
<keyword id="KW-0342">GTP-binding</keyword>
<keyword id="KW-0547">Nucleotide-binding</keyword>
<reference key="1">
    <citation type="journal article" date="2008" name="J. Bacteriol.">
        <title>Comparative genome sequence analysis of multidrug-resistant Acinetobacter baumannii.</title>
        <authorList>
            <person name="Adams M.D."/>
            <person name="Goglin K."/>
            <person name="Molyneaux N."/>
            <person name="Hujer K.M."/>
            <person name="Lavender H."/>
            <person name="Jamison J.J."/>
            <person name="MacDonald I.J."/>
            <person name="Martin K.M."/>
            <person name="Russo T."/>
            <person name="Campagnari A.A."/>
            <person name="Hujer A.M."/>
            <person name="Bonomo R.A."/>
            <person name="Gill S.R."/>
        </authorList>
    </citation>
    <scope>NUCLEOTIDE SEQUENCE [LARGE SCALE GENOMIC DNA]</scope>
    <source>
        <strain>AB0057</strain>
    </source>
</reference>
<proteinExistence type="inferred from homology"/>
<sequence length="283" mass="32557">MKRILIVTGQSGSGKSSALQVLEDLGYYCIDNLPLALLPEIVAKLDHENNLEQLALGVDVRSTRADMQEFDHVFEQLQKHGTVDVIYLTTQDQDLIARFSASRRPHPLANRFKSLLQCIHEEKQLLIPIQFRATVHIDTTDKSVHDLKHILLSKLGQSDNLIVILQSFGYKHGIPLDADYVFDVRHLPNPHWDLELRRFSGLDEPVKQFLEASPQANEMFEDILHFLKKWLPAFAEGHRHYMTISIGCTGGQHRSVYMVDRLKQALEAEWSVQVLHREMKHWS</sequence>
<dbReference type="EMBL" id="CP001182">
    <property type="protein sequence ID" value="ACJ40111.1"/>
    <property type="molecule type" value="Genomic_DNA"/>
</dbReference>
<dbReference type="SMR" id="B7I684"/>
<dbReference type="KEGG" id="abn:AB57_0691"/>
<dbReference type="HOGENOM" id="CLU_059558_1_1_6"/>
<dbReference type="Proteomes" id="UP000007094">
    <property type="component" value="Chromosome"/>
</dbReference>
<dbReference type="GO" id="GO:0005524">
    <property type="term" value="F:ATP binding"/>
    <property type="evidence" value="ECO:0007669"/>
    <property type="project" value="UniProtKB-UniRule"/>
</dbReference>
<dbReference type="GO" id="GO:0005525">
    <property type="term" value="F:GTP binding"/>
    <property type="evidence" value="ECO:0007669"/>
    <property type="project" value="UniProtKB-UniRule"/>
</dbReference>
<dbReference type="Gene3D" id="3.40.50.300">
    <property type="entry name" value="P-loop containing nucleotide triphosphate hydrolases"/>
    <property type="match status" value="1"/>
</dbReference>
<dbReference type="HAMAP" id="MF_00636">
    <property type="entry name" value="RapZ_like"/>
    <property type="match status" value="1"/>
</dbReference>
<dbReference type="InterPro" id="IPR027417">
    <property type="entry name" value="P-loop_NTPase"/>
</dbReference>
<dbReference type="InterPro" id="IPR005337">
    <property type="entry name" value="RapZ-like"/>
</dbReference>
<dbReference type="InterPro" id="IPR053930">
    <property type="entry name" value="RapZ-like_N"/>
</dbReference>
<dbReference type="InterPro" id="IPR053931">
    <property type="entry name" value="RapZ_C"/>
</dbReference>
<dbReference type="NCBIfam" id="NF003828">
    <property type="entry name" value="PRK05416.1"/>
    <property type="match status" value="1"/>
</dbReference>
<dbReference type="PANTHER" id="PTHR30448">
    <property type="entry name" value="RNASE ADAPTER PROTEIN RAPZ"/>
    <property type="match status" value="1"/>
</dbReference>
<dbReference type="PANTHER" id="PTHR30448:SF0">
    <property type="entry name" value="RNASE ADAPTER PROTEIN RAPZ"/>
    <property type="match status" value="1"/>
</dbReference>
<dbReference type="Pfam" id="PF22740">
    <property type="entry name" value="PapZ_C"/>
    <property type="match status" value="1"/>
</dbReference>
<dbReference type="Pfam" id="PF03668">
    <property type="entry name" value="RapZ-like_N"/>
    <property type="match status" value="1"/>
</dbReference>
<dbReference type="PIRSF" id="PIRSF005052">
    <property type="entry name" value="P-loopkin"/>
    <property type="match status" value="1"/>
</dbReference>
<dbReference type="SUPFAM" id="SSF52540">
    <property type="entry name" value="P-loop containing nucleoside triphosphate hydrolases"/>
    <property type="match status" value="1"/>
</dbReference>
<name>Y691_ACIB5</name>
<accession>B7I684</accession>
<evidence type="ECO:0000255" key="1">
    <source>
        <dbReference type="HAMAP-Rule" id="MF_00636"/>
    </source>
</evidence>
<feature type="chain" id="PRO_1000130720" description="Nucleotide-binding protein AB57_0691">
    <location>
        <begin position="1"/>
        <end position="283"/>
    </location>
</feature>
<feature type="binding site" evidence="1">
    <location>
        <begin position="9"/>
        <end position="16"/>
    </location>
    <ligand>
        <name>ATP</name>
        <dbReference type="ChEBI" id="CHEBI:30616"/>
    </ligand>
</feature>
<feature type="binding site" evidence="1">
    <location>
        <begin position="59"/>
        <end position="62"/>
    </location>
    <ligand>
        <name>GTP</name>
        <dbReference type="ChEBI" id="CHEBI:37565"/>
    </ligand>
</feature>